<comment type="subcellular location">
    <subcellularLocation>
        <location evidence="5">Membrane</location>
        <topology evidence="5">Multi-pass membrane protein</topology>
    </subcellularLocation>
</comment>
<comment type="alternative products">
    <event type="alternative splicing"/>
    <isoform>
        <id>Q8VI59-1</id>
        <name>1</name>
        <sequence type="displayed"/>
    </isoform>
    <isoform>
        <id>Q8VI59-2</id>
        <name>2</name>
        <sequence type="described" ref="VSP_033246"/>
    </isoform>
</comment>
<comment type="similarity">
    <text evidence="5">Belongs to the pecanex family.</text>
</comment>
<keyword id="KW-0025">Alternative splicing</keyword>
<keyword id="KW-0325">Glycoprotein</keyword>
<keyword id="KW-0472">Membrane</keyword>
<keyword id="KW-0597">Phosphoprotein</keyword>
<keyword id="KW-1185">Reference proteome</keyword>
<keyword id="KW-0812">Transmembrane</keyword>
<keyword id="KW-1133">Transmembrane helix</keyword>
<sequence>MGSQVLQILRQGVWASLTGGWFFDPHQSTFSNCFHLYVWIFLLIFPFLLYMVLPPSLMVAGVYCLVVAVIFATIKTVNYRLHAMFDQGEIVEKRNSTMGEQEEEAAQGESSLPRDPGVEMTVFRKVSSTPPVRCSSQHSVFGFNQVSELLPRMEDSGPLRDIKELVREQGSNNVIVTSADREMLKLSSQEKLIGDLPQTPPGVVPDPSLPSTDSSERSPMAGDGVPWGGSGVADTPMSPLLKGSLSQELSKSFLTLTRPDRALVRTSSRREQCRGTGGYQPLDRRGSGDPMPQKAGSSDSCFSGTDRETLSSFKSEKTNSTHLDSPPGGHAPEGSDTDPPSEAELPASPDAGVPSDDTLRSFDTVIGAGTPPGQTEPLLVVRPKDLALLRPSKRRPPMRGHSPPGRTPRRPLLEGSGFFEDEDTSEGSELSPASSLRSQRRYSTDSSSSTSCYSPESSQGAAGGPRKRRAPHGAEEGTAVPPKRPYGTQRTPSTASAKTHARVLSMDGAGGDVLRAPLAGSKAELEAQPGMELAAGEPAVLPPEARRGPAANQPGWRGELQEEGAVGGAPEETGQRECTSNVRRAQAIRRRHNAGSNPTPPASVMGSPPSSLQEAQRGRAASHSRALTLPSALHFASSLLLTRAGPNVHEASNFDDTSEGAVHYFYDESGVRRSYTFGLAGGGYENPVSQPGEQAANGAWDRHSHSSSFHSADVPEATGGLNLLQPRPVVLQGMQVRRVPLEIPEEQTLMEEAPPRAQHSYKYWFLPGRWTSVRYERLALLALLDRTRGVMENIFGVGLSSLVAFLGYLLLLKGFFTDIWVFQFCLVIASCQYSLLKSVQPDAASPMHGHNWVIAYSRPVYFCICCLLIWLLDALGTAQPFPPVSLYGLTLFSASFFFCARDVATVFTLCFPFVFLLGLLPQVNTCLMYLLEQIDMHGFGGTAATSPLTAVFSLTRSLLAAALLYGFCLGAIKTPWPEQHVPVLFSVFCGLLVAMSYHLSRQSSDPTVLWSLVRSKLFPELEERSLETARVEPPDPLPEKMRQSVREVLHSDLVMCVVIAVLTFAVSASTVFIALKSVLGFVLYALAGAVGFFTHYLLPQLRKQLPWFCLSQPVLKPLEYSQYEVRGAAQVMWFEKLYAGLQCAEKYLIYPAVVLNALTVDAHTVVSHPDKFCLYCRALLMTVAGLKLLRSAFCCPPQQYLTLAFTVLLFHFDYPRLSQGFLLDYFLMSLLCSKLWDLLYKLRFVLTYIAPWQITWGSAFHAFAQPFAVPHSAMLFLQALLSGLFSTPLNPLLGSAVFIMSYARPLKFWERDYNTKRVDHSNTRLVTQLDRNPGADDNNLNSIFYEHLTRSLQHTLCGDLVLGRWGNYGPGDCFVLASDYLNALVHLIEVGNGLITFQLRGLEFRGTYCQQREVEAITEGVEEDEGCCCCEPGHLPRVLSFNAAFGQRWLAWEVTASKYVLEGYSISDNNAASMLQVFDLRKILVTYYVKSIIYYVSRSPKLETWLNHEGIAAALRPVRALGYADSDPTFSLSVDEDYDLRLSGLSLPSFCAVHLEWIQYCASRRSQPVDQDWNSPLVTLCFGLCVLGRRALGTASHSMSASLEPFLYGLHALFKGDFRITSPRDEWVFADMDLLHRVVAPGVRMALKLHQDHFTSPDEYEEPAALYDAIAANEERLVISHEGDPAWRSAILSNTPSLLALRHVMDDASDEYKIIMLNRRHLSFRVIKVNRECVRGLWAGQQQELVFLRNRNPERGSIQNAKQALRNMINSSCDQPLGYPIYVSPLTTSLAGSHPQLRALWGGPVSLGAIARWLLRSWERLHKGCGAGCNSGGNVDDSDCGGGGGLTSLSNHPPLAHPTPENAAGSSEQPLPPGPSWGPRPSLSGSGDGRPPPLLQWPPPRLPGPPPASPAPTEGPRPSRPSGPALLNSEGPSGKWSLGGRKGLGGPDGEPASGSPKGGTPKSQAPLDLSLSPDVSSEASPARTTQDLPCLDSSIPEGCTPSGAPGDWPVPAEERESPAAQPLLEHQY</sequence>
<feature type="chain" id="PRO_0000215796" description="Pecanex-like protein 3">
    <location>
        <begin position="1"/>
        <end position="2028"/>
    </location>
</feature>
<feature type="transmembrane region" description="Helical" evidence="2">
    <location>
        <begin position="33"/>
        <end position="53"/>
    </location>
</feature>
<feature type="transmembrane region" description="Helical" evidence="2">
    <location>
        <begin position="54"/>
        <end position="74"/>
    </location>
</feature>
<feature type="transmembrane region" description="Helical" evidence="2">
    <location>
        <begin position="793"/>
        <end position="815"/>
    </location>
</feature>
<feature type="transmembrane region" description="Helical" evidence="2">
    <location>
        <begin position="819"/>
        <end position="836"/>
    </location>
</feature>
<feature type="transmembrane region" description="Helical" evidence="2">
    <location>
        <begin position="852"/>
        <end position="872"/>
    </location>
</feature>
<feature type="transmembrane region" description="Helical" evidence="2">
    <location>
        <begin position="880"/>
        <end position="900"/>
    </location>
</feature>
<feature type="transmembrane region" description="Helical" evidence="2">
    <location>
        <begin position="903"/>
        <end position="923"/>
    </location>
</feature>
<feature type="transmembrane region" description="Helical" evidence="2">
    <location>
        <begin position="946"/>
        <end position="968"/>
    </location>
</feature>
<feature type="transmembrane region" description="Helical" evidence="2">
    <location>
        <begin position="980"/>
        <end position="1000"/>
    </location>
</feature>
<feature type="transmembrane region" description="Helical" evidence="2">
    <location>
        <begin position="1053"/>
        <end position="1073"/>
    </location>
</feature>
<feature type="transmembrane region" description="Helical" evidence="2">
    <location>
        <begin position="1078"/>
        <end position="1098"/>
    </location>
</feature>
<feature type="transmembrane region" description="Helical" evidence="2">
    <location>
        <begin position="1244"/>
        <end position="1264"/>
    </location>
</feature>
<feature type="transmembrane region" description="Helical" evidence="2">
    <location>
        <begin position="1280"/>
        <end position="1300"/>
    </location>
</feature>
<feature type="region of interest" description="Disordered" evidence="3">
    <location>
        <begin position="96"/>
        <end position="116"/>
    </location>
</feature>
<feature type="region of interest" description="Disordered" evidence="3">
    <location>
        <begin position="193"/>
        <end position="239"/>
    </location>
</feature>
<feature type="region of interest" description="Disordered" evidence="3">
    <location>
        <begin position="263"/>
        <end position="625"/>
    </location>
</feature>
<feature type="region of interest" description="Disordered" evidence="3">
    <location>
        <begin position="1845"/>
        <end position="2028"/>
    </location>
</feature>
<feature type="compositionally biased region" description="Pro residues" evidence="3">
    <location>
        <begin position="198"/>
        <end position="208"/>
    </location>
</feature>
<feature type="compositionally biased region" description="Basic and acidic residues" evidence="3">
    <location>
        <begin position="263"/>
        <end position="273"/>
    </location>
</feature>
<feature type="compositionally biased region" description="Basic and acidic residues" evidence="3">
    <location>
        <begin position="305"/>
        <end position="319"/>
    </location>
</feature>
<feature type="compositionally biased region" description="Polar residues" evidence="3">
    <location>
        <begin position="427"/>
        <end position="437"/>
    </location>
</feature>
<feature type="compositionally biased region" description="Low complexity" evidence="3">
    <location>
        <begin position="444"/>
        <end position="459"/>
    </location>
</feature>
<feature type="compositionally biased region" description="Polar residues" evidence="3">
    <location>
        <begin position="488"/>
        <end position="497"/>
    </location>
</feature>
<feature type="compositionally biased region" description="Pro residues" evidence="3">
    <location>
        <begin position="1890"/>
        <end position="1921"/>
    </location>
</feature>
<feature type="compositionally biased region" description="Low complexity" evidence="3">
    <location>
        <begin position="1966"/>
        <end position="1977"/>
    </location>
</feature>
<feature type="compositionally biased region" description="Polar residues" evidence="3">
    <location>
        <begin position="1978"/>
        <end position="1987"/>
    </location>
</feature>
<feature type="modified residue" description="Phosphoserine" evidence="8">
    <location>
        <position position="127"/>
    </location>
</feature>
<feature type="modified residue" description="Phosphothreonine" evidence="1">
    <location>
        <position position="129"/>
    </location>
</feature>
<feature type="modified residue" description="Phosphothreonine" evidence="1">
    <location>
        <position position="370"/>
    </location>
</feature>
<feature type="modified residue" description="Phosphoserine" evidence="1">
    <location>
        <position position="392"/>
    </location>
</feature>
<feature type="modified residue" description="Phosphoserine" evidence="8">
    <location>
        <position position="431"/>
    </location>
</feature>
<feature type="modified residue" description="Phosphoserine" evidence="7">
    <location>
        <position position="505"/>
    </location>
</feature>
<feature type="modified residue" description="Phosphoserine" evidence="8">
    <location>
        <position position="521"/>
    </location>
</feature>
<feature type="modified residue" description="Phosphoserine" evidence="1">
    <location>
        <position position="1025"/>
    </location>
</feature>
<feature type="modified residue" description="Phosphoserine" evidence="1">
    <location>
        <position position="1697"/>
    </location>
</feature>
<feature type="modified residue" description="Phosphoserine" evidence="1">
    <location>
        <position position="1909"/>
    </location>
</feature>
<feature type="modified residue" description="Phosphoserine" evidence="1">
    <location>
        <position position="1955"/>
    </location>
</feature>
<feature type="glycosylation site" description="N-linked (GlcNAc...) asparagine" evidence="2">
    <location>
        <position position="95"/>
    </location>
</feature>
<feature type="glycosylation site" description="N-linked (GlcNAc...) asparagine" evidence="2">
    <location>
        <position position="319"/>
    </location>
</feature>
<feature type="glycosylation site" description="N-linked (GlcNAc...) asparagine" evidence="2">
    <location>
        <position position="1770"/>
    </location>
</feature>
<feature type="splice variant" id="VSP_033246" description="In isoform 2." evidence="4">
    <location>
        <begin position="161"/>
        <end position="568"/>
    </location>
</feature>
<name>PCX3_MOUSE</name>
<accession>Q8VI59</accession>
<dbReference type="EMBL" id="BC096538">
    <property type="status" value="NOT_ANNOTATED_CDS"/>
    <property type="molecule type" value="mRNA"/>
</dbReference>
<dbReference type="EMBL" id="AF237953">
    <property type="protein sequence ID" value="AAL62024.1"/>
    <property type="molecule type" value="mRNA"/>
</dbReference>
<dbReference type="CCDS" id="CCDS29475.2">
    <molecule id="Q8VI59-1"/>
</dbReference>
<dbReference type="RefSeq" id="NP_659117.2">
    <molecule id="Q8VI59-1"/>
    <property type="nucleotide sequence ID" value="NM_144868.3"/>
</dbReference>
<dbReference type="BioGRID" id="222613">
    <property type="interactions" value="1"/>
</dbReference>
<dbReference type="FunCoup" id="Q8VI59">
    <property type="interactions" value="516"/>
</dbReference>
<dbReference type="STRING" id="10090.ENSMUSP00000109245"/>
<dbReference type="GlyCosmos" id="Q8VI59">
    <property type="glycosylation" value="3 sites, No reported glycans"/>
</dbReference>
<dbReference type="GlyGen" id="Q8VI59">
    <property type="glycosylation" value="5 sites"/>
</dbReference>
<dbReference type="iPTMnet" id="Q8VI59"/>
<dbReference type="PhosphoSitePlus" id="Q8VI59"/>
<dbReference type="SwissPalm" id="Q8VI59"/>
<dbReference type="PaxDb" id="10090-ENSMUSP00000109245"/>
<dbReference type="PeptideAtlas" id="Q8VI59"/>
<dbReference type="ProteomicsDB" id="288008">
    <molecule id="Q8VI59-1"/>
</dbReference>
<dbReference type="ProteomicsDB" id="288009">
    <molecule id="Q8VI59-2"/>
</dbReference>
<dbReference type="Pumba" id="Q8VI59"/>
<dbReference type="Antibodypedia" id="7459">
    <property type="antibodies" value="15 antibodies from 9 providers"/>
</dbReference>
<dbReference type="DNASU" id="104401"/>
<dbReference type="Ensembl" id="ENSMUST00000068169.12">
    <molecule id="Q8VI59-2"/>
    <property type="protein sequence ID" value="ENSMUSP00000063786.6"/>
    <property type="gene ID" value="ENSMUSG00000054874.13"/>
</dbReference>
<dbReference type="Ensembl" id="ENSMUST00000113615.9">
    <molecule id="Q8VI59-1"/>
    <property type="protein sequence ID" value="ENSMUSP00000109245.3"/>
    <property type="gene ID" value="ENSMUSG00000054874.13"/>
</dbReference>
<dbReference type="GeneID" id="104401"/>
<dbReference type="KEGG" id="mmu:104401"/>
<dbReference type="UCSC" id="uc008gep.2">
    <molecule id="Q8VI59-2"/>
    <property type="organism name" value="mouse"/>
</dbReference>
<dbReference type="UCSC" id="uc008geq.2">
    <molecule id="Q8VI59-1"/>
    <property type="organism name" value="mouse"/>
</dbReference>
<dbReference type="AGR" id="MGI:1861733"/>
<dbReference type="CTD" id="399909"/>
<dbReference type="MGI" id="MGI:1861733">
    <property type="gene designation" value="Pcnx3"/>
</dbReference>
<dbReference type="VEuPathDB" id="HostDB:ENSMUSG00000054874"/>
<dbReference type="eggNOG" id="KOG3604">
    <property type="taxonomic scope" value="Eukaryota"/>
</dbReference>
<dbReference type="GeneTree" id="ENSGT00940000158735"/>
<dbReference type="HOGENOM" id="CLU_000602_0_1_1"/>
<dbReference type="InParanoid" id="Q8VI59"/>
<dbReference type="OMA" id="QSWPHHP"/>
<dbReference type="OrthoDB" id="10037631at2759"/>
<dbReference type="PhylomeDB" id="Q8VI59"/>
<dbReference type="TreeFam" id="TF313570"/>
<dbReference type="BioGRID-ORCS" id="104401">
    <property type="hits" value="5 hits in 80 CRISPR screens"/>
</dbReference>
<dbReference type="PRO" id="PR:Q8VI59"/>
<dbReference type="Proteomes" id="UP000000589">
    <property type="component" value="Chromosome 19"/>
</dbReference>
<dbReference type="RNAct" id="Q8VI59">
    <property type="molecule type" value="protein"/>
</dbReference>
<dbReference type="Bgee" id="ENSMUSG00000054874">
    <property type="expression patterns" value="Expressed in embryonic brain and 240 other cell types or tissues"/>
</dbReference>
<dbReference type="ExpressionAtlas" id="Q8VI59">
    <property type="expression patterns" value="baseline and differential"/>
</dbReference>
<dbReference type="GO" id="GO:0016020">
    <property type="term" value="C:membrane"/>
    <property type="evidence" value="ECO:0007669"/>
    <property type="project" value="UniProtKB-SubCell"/>
</dbReference>
<dbReference type="InterPro" id="IPR039797">
    <property type="entry name" value="Pecanex"/>
</dbReference>
<dbReference type="InterPro" id="IPR007735">
    <property type="entry name" value="Pecanex_C"/>
</dbReference>
<dbReference type="PANTHER" id="PTHR12372">
    <property type="entry name" value="PECANEX"/>
    <property type="match status" value="1"/>
</dbReference>
<dbReference type="PANTHER" id="PTHR12372:SF4">
    <property type="entry name" value="PECANEX-LIKE PROTEIN 3"/>
    <property type="match status" value="1"/>
</dbReference>
<dbReference type="Pfam" id="PF05041">
    <property type="entry name" value="Pecanex_C"/>
    <property type="match status" value="1"/>
</dbReference>
<evidence type="ECO:0000250" key="1">
    <source>
        <dbReference type="UniProtKB" id="Q9H6A9"/>
    </source>
</evidence>
<evidence type="ECO:0000255" key="2"/>
<evidence type="ECO:0000256" key="3">
    <source>
        <dbReference type="SAM" id="MobiDB-lite"/>
    </source>
</evidence>
<evidence type="ECO:0000303" key="4">
    <source>
    </source>
</evidence>
<evidence type="ECO:0000305" key="5"/>
<evidence type="ECO:0000312" key="6">
    <source>
        <dbReference type="MGI" id="MGI:1861733"/>
    </source>
</evidence>
<evidence type="ECO:0007744" key="7">
    <source>
    </source>
</evidence>
<evidence type="ECO:0007744" key="8">
    <source>
    </source>
</evidence>
<organism>
    <name type="scientific">Mus musculus</name>
    <name type="common">Mouse</name>
    <dbReference type="NCBI Taxonomy" id="10090"/>
    <lineage>
        <taxon>Eukaryota</taxon>
        <taxon>Metazoa</taxon>
        <taxon>Chordata</taxon>
        <taxon>Craniata</taxon>
        <taxon>Vertebrata</taxon>
        <taxon>Euteleostomi</taxon>
        <taxon>Mammalia</taxon>
        <taxon>Eutheria</taxon>
        <taxon>Euarchontoglires</taxon>
        <taxon>Glires</taxon>
        <taxon>Rodentia</taxon>
        <taxon>Myomorpha</taxon>
        <taxon>Muroidea</taxon>
        <taxon>Muridae</taxon>
        <taxon>Murinae</taxon>
        <taxon>Mus</taxon>
        <taxon>Mus</taxon>
    </lineage>
</organism>
<proteinExistence type="evidence at protein level"/>
<reference key="1">
    <citation type="journal article" date="2000" name="Cytogenet. Cell Genet.">
        <title>Genomic sequencing reveals the structure of the Kcnk6 and map3k11 genes and their close vicinity to the sipa1 gene on mouse chromosome 19.</title>
        <authorList>
            <person name="Saridaki A."/>
            <person name="Ferraz C."/>
            <person name="Demaille J."/>
            <person name="Scherer G."/>
            <person name="Roux A.-F."/>
        </authorList>
    </citation>
    <scope>NUCLEOTIDE SEQUENCE [MRNA] (ISOFORM 2)</scope>
</reference>
<reference key="2">
    <citation type="journal article" date="2004" name="Genome Res.">
        <title>The status, quality, and expansion of the NIH full-length cDNA project: the Mammalian Gene Collection (MGC).</title>
        <authorList>
            <consortium name="The MGC Project Team"/>
        </authorList>
    </citation>
    <scope>NUCLEOTIDE SEQUENCE [LARGE SCALE MRNA] (ISOFORM 1)</scope>
</reference>
<reference key="3">
    <citation type="journal article" date="2009" name="Immunity">
        <title>The phagosomal proteome in interferon-gamma-activated macrophages.</title>
        <authorList>
            <person name="Trost M."/>
            <person name="English L."/>
            <person name="Lemieux S."/>
            <person name="Courcelles M."/>
            <person name="Desjardins M."/>
            <person name="Thibault P."/>
        </authorList>
    </citation>
    <scope>PHOSPHORYLATION [LARGE SCALE ANALYSIS] AT SER-505</scope>
    <scope>IDENTIFICATION BY MASS SPECTROMETRY [LARGE SCALE ANALYSIS]</scope>
</reference>
<reference key="4">
    <citation type="journal article" date="2010" name="Cell">
        <title>A tissue-specific atlas of mouse protein phosphorylation and expression.</title>
        <authorList>
            <person name="Huttlin E.L."/>
            <person name="Jedrychowski M.P."/>
            <person name="Elias J.E."/>
            <person name="Goswami T."/>
            <person name="Rad R."/>
            <person name="Beausoleil S.A."/>
            <person name="Villen J."/>
            <person name="Haas W."/>
            <person name="Sowa M.E."/>
            <person name="Gygi S.P."/>
        </authorList>
    </citation>
    <scope>PHOSPHORYLATION [LARGE SCALE ANALYSIS] AT SER-127; SER-431 AND SER-521</scope>
    <scope>IDENTIFICATION BY MASS SPECTROMETRY [LARGE SCALE ANALYSIS]</scope>
    <source>
        <tissue>Brain</tissue>
        <tissue>Kidney</tissue>
        <tissue>Testis</tissue>
    </source>
</reference>
<protein>
    <recommendedName>
        <fullName>Pecanex-like protein 3</fullName>
    </recommendedName>
    <alternativeName>
        <fullName evidence="6">Pecanex homolog protein 3</fullName>
    </alternativeName>
</protein>
<gene>
    <name evidence="6" type="primary">Pcnx3</name>
    <name type="synonym">Pcnxl3</name>
</gene>